<feature type="chain" id="PRO_0000263102" description="Sterile alpha motif domain-containing protein 7">
    <location>
        <begin position="1"/>
        <end position="446"/>
    </location>
</feature>
<feature type="domain" description="SAM" evidence="2">
    <location>
        <begin position="327"/>
        <end position="392"/>
    </location>
</feature>
<feature type="region of interest" description="Required for localization to nuclear polycomb bodies" evidence="1">
    <location>
        <begin position="94"/>
        <end position="168"/>
    </location>
</feature>
<feature type="region of interest" description="Disordered" evidence="3">
    <location>
        <begin position="187"/>
        <end position="207"/>
    </location>
</feature>
<feature type="region of interest" description="Disordered" evidence="3">
    <location>
        <begin position="225"/>
        <end position="277"/>
    </location>
</feature>
<feature type="compositionally biased region" description="Polar residues" evidence="3">
    <location>
        <begin position="232"/>
        <end position="249"/>
    </location>
</feature>
<feature type="sequence variant" id="VAR_029586" description="In dbSNP:rs10513680.">
    <original>E</original>
    <variation>D</variation>
    <location>
        <position position="220"/>
    </location>
</feature>
<feature type="sequence variant" id="VAR_089289" description="In MDCD; uncertain significance; the orthologous mouse mutation results in decreased repression of CRX-controlled gene expression in a luciferase assay." evidence="5">
    <original>D</original>
    <variation>V</variation>
    <location>
        <position position="331"/>
    </location>
</feature>
<feature type="sequence variant" id="VAR_089290" description="In MDCD; uncertain significance; the underlying nucleotide substitution also affects splicing resulting in the production of transcripts lacking exon 9 in addition to normally spliced transcripts with variant I-385; dbSNP:rs746879032." evidence="5">
    <original>V</original>
    <variation>I</variation>
    <location>
        <position position="385"/>
    </location>
</feature>
<gene>
    <name type="primary">SAMD7</name>
</gene>
<proteinExistence type="evidence at protein level"/>
<name>SAMD7_HUMAN</name>
<protein>
    <recommendedName>
        <fullName>Sterile alpha motif domain-containing protein 7</fullName>
        <shortName>SAM domain-containing protein 7</shortName>
    </recommendedName>
</protein>
<evidence type="ECO:0000250" key="1">
    <source>
        <dbReference type="UniProtKB" id="Q8C8Y5"/>
    </source>
</evidence>
<evidence type="ECO:0000255" key="2">
    <source>
        <dbReference type="PROSITE-ProRule" id="PRU00184"/>
    </source>
</evidence>
<evidence type="ECO:0000256" key="3">
    <source>
        <dbReference type="SAM" id="MobiDB-lite"/>
    </source>
</evidence>
<evidence type="ECO:0000269" key="4">
    <source>
    </source>
</evidence>
<evidence type="ECO:0000269" key="5">
    <source>
    </source>
</evidence>
<reference key="1">
    <citation type="journal article" date="2007" name="BMC Genomics">
        <title>The full-ORF clone resource of the German cDNA consortium.</title>
        <authorList>
            <person name="Bechtel S."/>
            <person name="Rosenfelder H."/>
            <person name="Duda A."/>
            <person name="Schmidt C.P."/>
            <person name="Ernst U."/>
            <person name="Wellenreuther R."/>
            <person name="Mehrle A."/>
            <person name="Schuster C."/>
            <person name="Bahr A."/>
            <person name="Bloecker H."/>
            <person name="Heubner D."/>
            <person name="Hoerlein A."/>
            <person name="Michel G."/>
            <person name="Wedler H."/>
            <person name="Koehrer K."/>
            <person name="Ottenwaelder B."/>
            <person name="Poustka A."/>
            <person name="Wiemann S."/>
            <person name="Schupp I."/>
        </authorList>
    </citation>
    <scope>NUCLEOTIDE SEQUENCE [LARGE SCALE MRNA]</scope>
    <source>
        <tissue>Retina</tissue>
    </source>
</reference>
<reference key="2">
    <citation type="journal article" date="2004" name="Genome Res.">
        <title>The status, quality, and expansion of the NIH full-length cDNA project: the Mammalian Gene Collection (MGC).</title>
        <authorList>
            <consortium name="The MGC Project Team"/>
        </authorList>
    </citation>
    <scope>NUCLEOTIDE SEQUENCE [LARGE SCALE MRNA]</scope>
</reference>
<reference key="3">
    <citation type="journal article" date="2016" name="Sci. Rep.">
        <title>Autosomal recessive retinitis pigmentosa with homozygous rhodopsin mutation E150K and non-coding cis-regulatory variants in CRX-binding regions of SAMD7.</title>
        <authorList>
            <person name="Van Schil K."/>
            <person name="Karlstetter M."/>
            <person name="Aslanidis A."/>
            <person name="Dannhausen K."/>
            <person name="Azam M."/>
            <person name="Qamar R."/>
            <person name="Leroy B.P."/>
            <person name="Depasse F."/>
            <person name="Langmann T."/>
            <person name="De Baere E."/>
        </authorList>
    </citation>
    <scope>TISSUE SPECIFICITY</scope>
</reference>
<reference key="4">
    <citation type="journal article" date="2024" name="Am. J. Hum. Genet.">
        <title>Mutations in SAMD7 cause autosomal-recessive macular dystrophy with or without cone dysfunction.</title>
        <authorList>
            <person name="Bauwens M."/>
            <person name="Celik E."/>
            <person name="Zur D."/>
            <person name="Lin S."/>
            <person name="Quinodoz M."/>
            <person name="Michaelides M."/>
            <person name="Webster A.R."/>
            <person name="Van Den Broeck F."/>
            <person name="Leroy B.P."/>
            <person name="Rizel L."/>
            <person name="Moye A.R."/>
            <person name="Meunier A."/>
            <person name="Tran H.V."/>
            <person name="Moulin A.P."/>
            <person name="Mahieu Q."/>
            <person name="Van Heetvelde M."/>
            <person name="Arno G."/>
            <person name="Rivolta C."/>
            <person name="De Baere E."/>
            <person name="Ben-Yosef T."/>
        </authorList>
    </citation>
    <scope>VARIANTS MDCD VAL-331 AND ILE-385</scope>
    <scope>CHARACTERIZATION OF VARIANTS MDCD VAL-331 AND ILE-385</scope>
    <scope>INVOLVEMENT IN MDCD</scope>
    <scope>SUBCELLULAR LOCATION</scope>
    <scope>TISSUE SPECIFICITY</scope>
</reference>
<sequence>MAVNPLLTPTGQQTIPLIPSPFGPPTVDRDVLPSTVAPTDPRQFCVPSQFGSSVLPNTNMANVLSSRIYPGWGILPPESIKAVARRNEMIQRHHTARTEMEMYAIYQQRRMEKINPKGLAGLGIPFLYGSSVPAAPAAYHGRSMLPAGDLHFHRSTLRNLQGNPMLAATAPHFEESWGQRCRRLRKNTGNQKALDSDAESSKSQAEEKILGQTHAVPYEEDHYAKDPDIEAPSNQKSSETNEKPTTALANTCGELEPTHRKPWGSHTTTLKAKAWDDGKEEASEQIFATCDEKNGVCPPVPRPSLPGTHALVTIGGNLSLDEDIQKWTVDDVHSFIRSLPGCSDYAQVFKDHAIDGETLPLLTEEHLRGTMGLKLGPALKIQSQVSQHVGSMFYKKTLSFPIRQAFDQPADTSPLLDPNSWSDTMNIFCPQDTIIPKGIERGSMRN</sequence>
<dbReference type="EMBL" id="BX537903">
    <property type="protein sequence ID" value="CAD97889.1"/>
    <property type="molecule type" value="mRNA"/>
</dbReference>
<dbReference type="EMBL" id="BC117339">
    <property type="protein sequence ID" value="AAI17340.1"/>
    <property type="molecule type" value="mRNA"/>
</dbReference>
<dbReference type="CCDS" id="CCDS3209.1"/>
<dbReference type="RefSeq" id="NP_001291295.1">
    <property type="nucleotide sequence ID" value="NM_001304366.2"/>
</dbReference>
<dbReference type="RefSeq" id="NP_872416.1">
    <property type="nucleotide sequence ID" value="NM_182610.4"/>
</dbReference>
<dbReference type="SMR" id="Q7Z3H4"/>
<dbReference type="BioGRID" id="131314">
    <property type="interactions" value="14"/>
</dbReference>
<dbReference type="FunCoup" id="Q7Z3H4">
    <property type="interactions" value="8"/>
</dbReference>
<dbReference type="IntAct" id="Q7Z3H4">
    <property type="interactions" value="13"/>
</dbReference>
<dbReference type="STRING" id="9606.ENSP00000391299"/>
<dbReference type="GlyGen" id="Q7Z3H4">
    <property type="glycosylation" value="1 site"/>
</dbReference>
<dbReference type="iPTMnet" id="Q7Z3H4"/>
<dbReference type="PhosphoSitePlus" id="Q7Z3H4"/>
<dbReference type="BioMuta" id="SAMD7"/>
<dbReference type="DMDM" id="74713382"/>
<dbReference type="jPOST" id="Q7Z3H4"/>
<dbReference type="MassIVE" id="Q7Z3H4"/>
<dbReference type="PaxDb" id="9606-ENSP00000391299"/>
<dbReference type="PeptideAtlas" id="Q7Z3H4"/>
<dbReference type="ProteomicsDB" id="69051"/>
<dbReference type="Antibodypedia" id="51043">
    <property type="antibodies" value="137 antibodies from 14 providers"/>
</dbReference>
<dbReference type="DNASU" id="344658"/>
<dbReference type="Ensembl" id="ENST00000335556.7">
    <property type="protein sequence ID" value="ENSP00000334668.3"/>
    <property type="gene ID" value="ENSG00000187033.9"/>
</dbReference>
<dbReference type="Ensembl" id="ENST00000428432.6">
    <property type="protein sequence ID" value="ENSP00000391299.2"/>
    <property type="gene ID" value="ENSG00000187033.9"/>
</dbReference>
<dbReference type="GeneID" id="344658"/>
<dbReference type="KEGG" id="hsa:344658"/>
<dbReference type="MANE-Select" id="ENST00000335556.7">
    <property type="protein sequence ID" value="ENSP00000334668.3"/>
    <property type="RefSeq nucleotide sequence ID" value="NM_001304366.2"/>
    <property type="RefSeq protein sequence ID" value="NP_001291295.1"/>
</dbReference>
<dbReference type="UCSC" id="uc003fgd.4">
    <property type="organism name" value="human"/>
</dbReference>
<dbReference type="AGR" id="HGNC:25394"/>
<dbReference type="CTD" id="344658"/>
<dbReference type="DisGeNET" id="344658"/>
<dbReference type="GeneCards" id="SAMD7"/>
<dbReference type="HGNC" id="HGNC:25394">
    <property type="gene designation" value="SAMD7"/>
</dbReference>
<dbReference type="HPA" id="ENSG00000187033">
    <property type="expression patterns" value="Tissue enriched (retina)"/>
</dbReference>
<dbReference type="MalaCards" id="SAMD7"/>
<dbReference type="MIM" id="620493">
    <property type="type" value="gene"/>
</dbReference>
<dbReference type="MIM" id="620762">
    <property type="type" value="phenotype"/>
</dbReference>
<dbReference type="neXtProt" id="NX_Q7Z3H4"/>
<dbReference type="OpenTargets" id="ENSG00000187033"/>
<dbReference type="PharmGKB" id="PA134861212"/>
<dbReference type="VEuPathDB" id="HostDB:ENSG00000187033"/>
<dbReference type="eggNOG" id="KOG3829">
    <property type="taxonomic scope" value="Eukaryota"/>
</dbReference>
<dbReference type="GeneTree" id="ENSGT00940000160075"/>
<dbReference type="HOGENOM" id="CLU_046957_0_0_1"/>
<dbReference type="InParanoid" id="Q7Z3H4"/>
<dbReference type="OMA" id="THAFPYE"/>
<dbReference type="OrthoDB" id="9943471at2759"/>
<dbReference type="PAN-GO" id="Q7Z3H4">
    <property type="GO annotations" value="4 GO annotations based on evolutionary models"/>
</dbReference>
<dbReference type="PhylomeDB" id="Q7Z3H4"/>
<dbReference type="TreeFam" id="TF331299"/>
<dbReference type="PathwayCommons" id="Q7Z3H4"/>
<dbReference type="SignaLink" id="Q7Z3H4"/>
<dbReference type="BioGRID-ORCS" id="344658">
    <property type="hits" value="11 hits in 1136 CRISPR screens"/>
</dbReference>
<dbReference type="GenomeRNAi" id="344658"/>
<dbReference type="Pharos" id="Q7Z3H4">
    <property type="development level" value="Tdark"/>
</dbReference>
<dbReference type="PRO" id="PR:Q7Z3H4"/>
<dbReference type="Proteomes" id="UP000005640">
    <property type="component" value="Chromosome 3"/>
</dbReference>
<dbReference type="RNAct" id="Q7Z3H4">
    <property type="molecule type" value="protein"/>
</dbReference>
<dbReference type="Bgee" id="ENSG00000187033">
    <property type="expression patterns" value="Expressed in lymph node and 2 other cell types or tissues"/>
</dbReference>
<dbReference type="ExpressionAtlas" id="Q7Z3H4">
    <property type="expression patterns" value="baseline and differential"/>
</dbReference>
<dbReference type="GO" id="GO:0005737">
    <property type="term" value="C:cytoplasm"/>
    <property type="evidence" value="ECO:0007669"/>
    <property type="project" value="UniProtKB-SubCell"/>
</dbReference>
<dbReference type="GO" id="GO:0005634">
    <property type="term" value="C:nucleus"/>
    <property type="evidence" value="ECO:0000250"/>
    <property type="project" value="UniProtKB"/>
</dbReference>
<dbReference type="GO" id="GO:0035102">
    <property type="term" value="C:PRC1 complex"/>
    <property type="evidence" value="ECO:0000250"/>
    <property type="project" value="UniProtKB"/>
</dbReference>
<dbReference type="GO" id="GO:0003682">
    <property type="term" value="F:chromatin binding"/>
    <property type="evidence" value="ECO:0000318"/>
    <property type="project" value="GO_Central"/>
</dbReference>
<dbReference type="GO" id="GO:0001227">
    <property type="term" value="F:DNA-binding transcription repressor activity, RNA polymerase II-specific"/>
    <property type="evidence" value="ECO:0000250"/>
    <property type="project" value="UniProtKB"/>
</dbReference>
<dbReference type="GO" id="GO:0042393">
    <property type="term" value="F:histone binding"/>
    <property type="evidence" value="ECO:0000318"/>
    <property type="project" value="GO_Central"/>
</dbReference>
<dbReference type="GO" id="GO:0045892">
    <property type="term" value="P:negative regulation of DNA-templated transcription"/>
    <property type="evidence" value="ECO:0000318"/>
    <property type="project" value="GO_Central"/>
</dbReference>
<dbReference type="GO" id="GO:0045814">
    <property type="term" value="P:negative regulation of gene expression, epigenetic"/>
    <property type="evidence" value="ECO:0000250"/>
    <property type="project" value="UniProtKB"/>
</dbReference>
<dbReference type="GO" id="GO:0046548">
    <property type="term" value="P:retinal rod cell development"/>
    <property type="evidence" value="ECO:0000250"/>
    <property type="project" value="UniProtKB"/>
</dbReference>
<dbReference type="CDD" id="cd09579">
    <property type="entry name" value="SAM_Samd7_11"/>
    <property type="match status" value="1"/>
</dbReference>
<dbReference type="Gene3D" id="1.10.150.50">
    <property type="entry name" value="Transcription Factor, Ets-1"/>
    <property type="match status" value="1"/>
</dbReference>
<dbReference type="InterPro" id="IPR050548">
    <property type="entry name" value="PcG_chromatin_remod_factors"/>
</dbReference>
<dbReference type="InterPro" id="IPR001660">
    <property type="entry name" value="SAM"/>
</dbReference>
<dbReference type="InterPro" id="IPR013761">
    <property type="entry name" value="SAM/pointed_sf"/>
</dbReference>
<dbReference type="PANTHER" id="PTHR12247">
    <property type="entry name" value="POLYCOMB GROUP PROTEIN"/>
    <property type="match status" value="1"/>
</dbReference>
<dbReference type="PANTHER" id="PTHR12247:SF89">
    <property type="entry name" value="STERILE ALPHA MOTIF DOMAIN-CONTAINING PROTEIN 7"/>
    <property type="match status" value="1"/>
</dbReference>
<dbReference type="Pfam" id="PF00536">
    <property type="entry name" value="SAM_1"/>
    <property type="match status" value="1"/>
</dbReference>
<dbReference type="SMART" id="SM00454">
    <property type="entry name" value="SAM"/>
    <property type="match status" value="1"/>
</dbReference>
<dbReference type="SUPFAM" id="SSF47769">
    <property type="entry name" value="SAM/Pointed domain"/>
    <property type="match status" value="1"/>
</dbReference>
<dbReference type="PROSITE" id="PS50105">
    <property type="entry name" value="SAM_DOMAIN"/>
    <property type="match status" value="1"/>
</dbReference>
<accession>Q7Z3H4</accession>
<keyword id="KW-0963">Cytoplasm</keyword>
<keyword id="KW-0539">Nucleus</keyword>
<keyword id="KW-1267">Proteomics identification</keyword>
<keyword id="KW-1185">Reference proteome</keyword>
<organism>
    <name type="scientific">Homo sapiens</name>
    <name type="common">Human</name>
    <dbReference type="NCBI Taxonomy" id="9606"/>
    <lineage>
        <taxon>Eukaryota</taxon>
        <taxon>Metazoa</taxon>
        <taxon>Chordata</taxon>
        <taxon>Craniata</taxon>
        <taxon>Vertebrata</taxon>
        <taxon>Euteleostomi</taxon>
        <taxon>Mammalia</taxon>
        <taxon>Eutheria</taxon>
        <taxon>Euarchontoglires</taxon>
        <taxon>Primates</taxon>
        <taxon>Haplorrhini</taxon>
        <taxon>Catarrhini</taxon>
        <taxon>Hominidae</taxon>
        <taxon>Homo</taxon>
    </lineage>
</organism>
<comment type="function">
    <text evidence="1">Component of a Polycomb group (PcG) multiprotein PRC1-like complex, essential for establishing rod photoreceptor cell identity and function by silencing nonrod gene expression in developing rod photoreceptor cells. Via its association with the PRC1-like complex, promotes epigenetic repressive marks H3K27me3 and H2AK119ub marks in nonrod genes, silencing their transcription. Represses Crx-controlled photoreceptor-specific gene expression.</text>
</comment>
<comment type="subunit">
    <text evidence="1">Monomer, homodimer and homooligomer. Component of a Polycomb group (PcG) multiprotein PRC1-like complex. Interacts with PHC2, NR2E3 and SAMD11. Interacts with RNF1 in a PHC2-dependent manner.</text>
</comment>
<comment type="interaction">
    <interactant intactId="EBI-12148649">
        <id>Q7Z3H4</id>
    </interactant>
    <interactant intactId="EBI-12193763">
        <id>A1KXE4-2</id>
        <label>FAM168B</label>
    </interactant>
    <organismsDiffer>false</organismsDiffer>
    <experiments>3</experiments>
</comment>
<comment type="interaction">
    <interactant intactId="EBI-12148649">
        <id>Q7Z3H4</id>
    </interactant>
    <interactant intactId="EBI-10975473">
        <id>O60333-2</id>
        <label>KIF1B</label>
    </interactant>
    <organismsDiffer>false</organismsDiffer>
    <experiments>3</experiments>
</comment>
<comment type="interaction">
    <interactant intactId="EBI-12148649">
        <id>Q7Z3H4</id>
    </interactant>
    <interactant intactId="EBI-9996449">
        <id>Q9BYR8</id>
        <label>KRTAP3-1</label>
    </interactant>
    <organismsDiffer>false</organismsDiffer>
    <experiments>3</experiments>
</comment>
<comment type="interaction">
    <interactant intactId="EBI-12148649">
        <id>Q7Z3H4</id>
    </interactant>
    <interactant intactId="EBI-11962084">
        <id>Q3LI66</id>
        <label>KRTAP6-2</label>
    </interactant>
    <organismsDiffer>false</organismsDiffer>
    <experiments>5</experiments>
</comment>
<comment type="interaction">
    <interactant intactId="EBI-12148649">
        <id>Q7Z3H4</id>
    </interactant>
    <interactant intactId="EBI-22311199">
        <id>Q3LI67</id>
        <label>KRTAP6-3</label>
    </interactant>
    <organismsDiffer>false</organismsDiffer>
    <experiments>3</experiments>
</comment>
<comment type="interaction">
    <interactant intactId="EBI-12148649">
        <id>Q7Z3H4</id>
    </interactant>
    <interactant intactId="EBI-536879">
        <id>O43482</id>
        <label>OIP5</label>
    </interactant>
    <organismsDiffer>false</organismsDiffer>
    <experiments>3</experiments>
</comment>
<comment type="interaction">
    <interactant intactId="EBI-12148649">
        <id>Q7Z3H4</id>
    </interactant>
    <interactant intactId="EBI-396669">
        <id>Q9Y3C5</id>
        <label>RNF11</label>
    </interactant>
    <organismsDiffer>false</organismsDiffer>
    <experiments>3</experiments>
</comment>
<comment type="interaction">
    <interactant intactId="EBI-12148649">
        <id>Q7Z3H4</id>
    </interactant>
    <interactant intactId="EBI-12806590">
        <id>Q86WV8</id>
        <label>TSC1</label>
    </interactant>
    <organismsDiffer>false</organismsDiffer>
    <experiments>3</experiments>
</comment>
<comment type="interaction">
    <interactant intactId="EBI-12148649">
        <id>Q7Z3H4</id>
    </interactant>
    <interactant intactId="EBI-720609">
        <id>O76024</id>
        <label>WFS1</label>
    </interactant>
    <organismsDiffer>false</organismsDiffer>
    <experiments>3</experiments>
</comment>
<comment type="subcellular location">
    <subcellularLocation>
        <location evidence="5">Nucleus</location>
    </subcellularLocation>
    <subcellularLocation>
        <location evidence="1">Cytoplasm</location>
    </subcellularLocation>
    <text evidence="1">Co-localizes with PHC2 and RNF2 in nuclear polycomb bodies.</text>
</comment>
<comment type="tissue specificity">
    <text evidence="4 5">Expressed in the retina (at protein level) (PubMed:26887858). Expressed in the retinal inner and outer nuclear layers (PubMed:38272031).</text>
</comment>
<comment type="domain">
    <text evidence="1">The SAM domain mediates its oligomerization and localization to nuclear polycomb bodies.</text>
</comment>
<comment type="disease" evidence="5">
    <disease id="DI-06857">
        <name>Macular dystrophy with or without cone dysfunction</name>
        <acronym>MDCD</acronym>
        <description>A form of macular dystrophy, a retinal disease in which various forms of deposits, pigmentary changes, and atrophic lesions are observed in the macula lutea. MDCD is a progressive, autosomal recessive form characterized by reduced visual acuity and macular atrophy involving the fovea. Some patients also exhibit mild generalized cone dysfunction.</description>
        <dbReference type="MIM" id="620762"/>
    </disease>
    <text>The disease is caused by variants affecting the gene represented in this entry.</text>
</comment>